<gene>
    <name evidence="1" type="primary">ruvC</name>
    <name type="ordered locus">BMEA_A1757</name>
</gene>
<keyword id="KW-0963">Cytoplasm</keyword>
<keyword id="KW-0227">DNA damage</keyword>
<keyword id="KW-0233">DNA recombination</keyword>
<keyword id="KW-0234">DNA repair</keyword>
<keyword id="KW-0238">DNA-binding</keyword>
<keyword id="KW-0255">Endonuclease</keyword>
<keyword id="KW-0378">Hydrolase</keyword>
<keyword id="KW-0460">Magnesium</keyword>
<keyword id="KW-0479">Metal-binding</keyword>
<keyword id="KW-0540">Nuclease</keyword>
<organism>
    <name type="scientific">Brucella melitensis biotype 2 (strain ATCC 23457)</name>
    <dbReference type="NCBI Taxonomy" id="546272"/>
    <lineage>
        <taxon>Bacteria</taxon>
        <taxon>Pseudomonadati</taxon>
        <taxon>Pseudomonadota</taxon>
        <taxon>Alphaproteobacteria</taxon>
        <taxon>Hyphomicrobiales</taxon>
        <taxon>Brucellaceae</taxon>
        <taxon>Brucella/Ochrobactrum group</taxon>
        <taxon>Brucella</taxon>
    </lineage>
</organism>
<proteinExistence type="inferred from homology"/>
<comment type="function">
    <text evidence="1">The RuvA-RuvB-RuvC complex processes Holliday junction (HJ) DNA during genetic recombination and DNA repair. Endonuclease that resolves HJ intermediates. Cleaves cruciform DNA by making single-stranded nicks across the HJ at symmetrical positions within the homologous arms, yielding a 5'-phosphate and a 3'-hydroxyl group; requires a central core of homology in the junction. The consensus cleavage sequence is 5'-(A/T)TT(C/G)-3'. Cleavage occurs on the 3'-side of the TT dinucleotide at the point of strand exchange. HJ branch migration catalyzed by RuvA-RuvB allows RuvC to scan DNA until it finds its consensus sequence, where it cleaves and resolves the cruciform DNA.</text>
</comment>
<comment type="catalytic activity">
    <reaction evidence="1">
        <text>Endonucleolytic cleavage at a junction such as a reciprocal single-stranded crossover between two homologous DNA duplexes (Holliday junction).</text>
        <dbReference type="EC" id="3.1.21.10"/>
    </reaction>
</comment>
<comment type="cofactor">
    <cofactor evidence="1">
        <name>Mg(2+)</name>
        <dbReference type="ChEBI" id="CHEBI:18420"/>
    </cofactor>
    <text evidence="1">Binds 2 Mg(2+) ion per subunit.</text>
</comment>
<comment type="subunit">
    <text evidence="1">Homodimer which binds Holliday junction (HJ) DNA. The HJ becomes 2-fold symmetrical on binding to RuvC with unstacked arms; it has a different conformation from HJ DNA in complex with RuvA. In the full resolvosome a probable DNA-RuvA(4)-RuvB(12)-RuvC(2) complex forms which resolves the HJ.</text>
</comment>
<comment type="subcellular location">
    <subcellularLocation>
        <location evidence="1">Cytoplasm</location>
    </subcellularLocation>
</comment>
<comment type="similarity">
    <text evidence="1">Belongs to the RuvC family.</text>
</comment>
<name>RUVC_BRUMB</name>
<accession>C0REW7</accession>
<sequence length="173" mass="18455">MKETIRIIGIDPGLRRTGWGIVESLGNSLHFIGSGTVTSNAEMDLASRLCQLHEGLSKVLHEFMPHEAAVEHTFVNKDATATLKLGQARGIALLAPAQAGLPVAEYAPNAVKKAVIGVGHGEKQQIHMMVKVLMPRASFDTSDAADALAIAICHAHHRQSIVSARRMQALLAG</sequence>
<feature type="chain" id="PRO_1000195241" description="Crossover junction endodeoxyribonuclease RuvC">
    <location>
        <begin position="1"/>
        <end position="173"/>
    </location>
</feature>
<feature type="active site" evidence="1">
    <location>
        <position position="11"/>
    </location>
</feature>
<feature type="active site" evidence="1">
    <location>
        <position position="71"/>
    </location>
</feature>
<feature type="active site" evidence="1">
    <location>
        <position position="143"/>
    </location>
</feature>
<feature type="binding site" evidence="1">
    <location>
        <position position="11"/>
    </location>
    <ligand>
        <name>Mg(2+)</name>
        <dbReference type="ChEBI" id="CHEBI:18420"/>
        <label>1</label>
    </ligand>
</feature>
<feature type="binding site" evidence="1">
    <location>
        <position position="71"/>
    </location>
    <ligand>
        <name>Mg(2+)</name>
        <dbReference type="ChEBI" id="CHEBI:18420"/>
        <label>2</label>
    </ligand>
</feature>
<feature type="binding site" evidence="1">
    <location>
        <position position="143"/>
    </location>
    <ligand>
        <name>Mg(2+)</name>
        <dbReference type="ChEBI" id="CHEBI:18420"/>
        <label>1</label>
    </ligand>
</feature>
<reference key="1">
    <citation type="submission" date="2009-03" db="EMBL/GenBank/DDBJ databases">
        <title>Brucella melitensis ATCC 23457 whole genome shotgun sequencing project.</title>
        <authorList>
            <person name="Setubal J.C."/>
            <person name="Boyle S."/>
            <person name="Crasta O.R."/>
            <person name="Gillespie J.J."/>
            <person name="Kenyon R.W."/>
            <person name="Lu J."/>
            <person name="Mane S."/>
            <person name="Nagrani S."/>
            <person name="Shallom J.M."/>
            <person name="Shallom S."/>
            <person name="Shukla M."/>
            <person name="Snyder E.E."/>
            <person name="Sobral B.W."/>
            <person name="Wattam A.R."/>
            <person name="Will R."/>
            <person name="Williams K."/>
            <person name="Yoo H."/>
            <person name="Munk C."/>
            <person name="Tapia R."/>
            <person name="Han C."/>
            <person name="Detter J.C."/>
            <person name="Bruce D."/>
            <person name="Brettin T.S."/>
        </authorList>
    </citation>
    <scope>NUCLEOTIDE SEQUENCE [LARGE SCALE GENOMIC DNA]</scope>
    <source>
        <strain>ATCC 23457</strain>
    </source>
</reference>
<evidence type="ECO:0000255" key="1">
    <source>
        <dbReference type="HAMAP-Rule" id="MF_00034"/>
    </source>
</evidence>
<protein>
    <recommendedName>
        <fullName evidence="1">Crossover junction endodeoxyribonuclease RuvC</fullName>
        <ecNumber evidence="1">3.1.21.10</ecNumber>
    </recommendedName>
    <alternativeName>
        <fullName evidence="1">Holliday junction nuclease RuvC</fullName>
    </alternativeName>
    <alternativeName>
        <fullName evidence="1">Holliday junction resolvase RuvC</fullName>
    </alternativeName>
</protein>
<dbReference type="EC" id="3.1.21.10" evidence="1"/>
<dbReference type="EMBL" id="CP001488">
    <property type="protein sequence ID" value="ACO01439.1"/>
    <property type="molecule type" value="Genomic_DNA"/>
</dbReference>
<dbReference type="RefSeq" id="WP_002964793.1">
    <property type="nucleotide sequence ID" value="NC_012441.1"/>
</dbReference>
<dbReference type="SMR" id="C0REW7"/>
<dbReference type="GeneID" id="93017933"/>
<dbReference type="KEGG" id="bmi:BMEA_A1757"/>
<dbReference type="HOGENOM" id="CLU_091257_1_0_5"/>
<dbReference type="Proteomes" id="UP000001748">
    <property type="component" value="Chromosome I"/>
</dbReference>
<dbReference type="GO" id="GO:0005737">
    <property type="term" value="C:cytoplasm"/>
    <property type="evidence" value="ECO:0007669"/>
    <property type="project" value="UniProtKB-SubCell"/>
</dbReference>
<dbReference type="GO" id="GO:0048476">
    <property type="term" value="C:Holliday junction resolvase complex"/>
    <property type="evidence" value="ECO:0007669"/>
    <property type="project" value="UniProtKB-UniRule"/>
</dbReference>
<dbReference type="GO" id="GO:0008821">
    <property type="term" value="F:crossover junction DNA endonuclease activity"/>
    <property type="evidence" value="ECO:0007669"/>
    <property type="project" value="UniProtKB-UniRule"/>
</dbReference>
<dbReference type="GO" id="GO:0003677">
    <property type="term" value="F:DNA binding"/>
    <property type="evidence" value="ECO:0007669"/>
    <property type="project" value="UniProtKB-KW"/>
</dbReference>
<dbReference type="GO" id="GO:0000287">
    <property type="term" value="F:magnesium ion binding"/>
    <property type="evidence" value="ECO:0007669"/>
    <property type="project" value="UniProtKB-UniRule"/>
</dbReference>
<dbReference type="GO" id="GO:0006310">
    <property type="term" value="P:DNA recombination"/>
    <property type="evidence" value="ECO:0007669"/>
    <property type="project" value="UniProtKB-UniRule"/>
</dbReference>
<dbReference type="GO" id="GO:0006281">
    <property type="term" value="P:DNA repair"/>
    <property type="evidence" value="ECO:0007669"/>
    <property type="project" value="UniProtKB-UniRule"/>
</dbReference>
<dbReference type="CDD" id="cd16962">
    <property type="entry name" value="RuvC"/>
    <property type="match status" value="1"/>
</dbReference>
<dbReference type="FunFam" id="3.30.420.10:FF:000002">
    <property type="entry name" value="Crossover junction endodeoxyribonuclease RuvC"/>
    <property type="match status" value="1"/>
</dbReference>
<dbReference type="Gene3D" id="3.30.420.10">
    <property type="entry name" value="Ribonuclease H-like superfamily/Ribonuclease H"/>
    <property type="match status" value="1"/>
</dbReference>
<dbReference type="HAMAP" id="MF_00034">
    <property type="entry name" value="RuvC"/>
    <property type="match status" value="1"/>
</dbReference>
<dbReference type="InterPro" id="IPR012337">
    <property type="entry name" value="RNaseH-like_sf"/>
</dbReference>
<dbReference type="InterPro" id="IPR036397">
    <property type="entry name" value="RNaseH_sf"/>
</dbReference>
<dbReference type="InterPro" id="IPR020563">
    <property type="entry name" value="X-over_junc_endoDNase_Mg_BS"/>
</dbReference>
<dbReference type="InterPro" id="IPR002176">
    <property type="entry name" value="X-over_junc_endoDNase_RuvC"/>
</dbReference>
<dbReference type="NCBIfam" id="TIGR00228">
    <property type="entry name" value="ruvC"/>
    <property type="match status" value="1"/>
</dbReference>
<dbReference type="PANTHER" id="PTHR30194">
    <property type="entry name" value="CROSSOVER JUNCTION ENDODEOXYRIBONUCLEASE RUVC"/>
    <property type="match status" value="1"/>
</dbReference>
<dbReference type="PANTHER" id="PTHR30194:SF3">
    <property type="entry name" value="CROSSOVER JUNCTION ENDODEOXYRIBONUCLEASE RUVC"/>
    <property type="match status" value="1"/>
</dbReference>
<dbReference type="Pfam" id="PF02075">
    <property type="entry name" value="RuvC"/>
    <property type="match status" value="1"/>
</dbReference>
<dbReference type="PRINTS" id="PR00696">
    <property type="entry name" value="RSOLVASERUVC"/>
</dbReference>
<dbReference type="SUPFAM" id="SSF53098">
    <property type="entry name" value="Ribonuclease H-like"/>
    <property type="match status" value="1"/>
</dbReference>
<dbReference type="PROSITE" id="PS01321">
    <property type="entry name" value="RUVC"/>
    <property type="match status" value="1"/>
</dbReference>